<evidence type="ECO:0000250" key="1">
    <source>
        <dbReference type="UniProtKB" id="P19624"/>
    </source>
</evidence>
<evidence type="ECO:0000250" key="2">
    <source>
        <dbReference type="UniProtKB" id="P58718"/>
    </source>
</evidence>
<evidence type="ECO:0000305" key="3"/>
<sequence>MINNKPIIGIPIGDPAGVGPEIVVKSLTEAEVYEKCNPILIGDAKVIKQAMGFCNVNLNINSIKKADEGKFTLGTIDLIDLNNIDIDELKIGKVQGIAGKAAFEYIKKSVEMAKEGELDAIATTPINKESLREGNVNYIGHTEILADLTDTEDPLTMFEVRGMRVFFLTRHVSLRKACDLVTKERVLDYIIRCSEALEKLGVKDGKMAVAGLNPHSGEHGLFGDEEMKAVVPAIEEAQKMGYKVEGPIGADSVFHLALKGRYNSVLSLYHDQGHIATKTLDFERTIAVTNGMPILRTSVDHGTAFDIAGTGQASSVSMVEAIILAAKYSPKFKK</sequence>
<dbReference type="EC" id="1.1.1.408" evidence="2"/>
<dbReference type="EMBL" id="CP000962">
    <property type="protein sequence ID" value="ACA55182.1"/>
    <property type="molecule type" value="Genomic_DNA"/>
</dbReference>
<dbReference type="RefSeq" id="WP_012047748.1">
    <property type="nucleotide sequence ID" value="NC_010520.1"/>
</dbReference>
<dbReference type="SMR" id="B1KVV5"/>
<dbReference type="GeneID" id="5186463"/>
<dbReference type="KEGG" id="cbl:CLK_1647"/>
<dbReference type="HOGENOM" id="CLU_040168_0_1_9"/>
<dbReference type="GO" id="GO:0046872">
    <property type="term" value="F:metal ion binding"/>
    <property type="evidence" value="ECO:0007669"/>
    <property type="project" value="UniProtKB-KW"/>
</dbReference>
<dbReference type="GO" id="GO:0051287">
    <property type="term" value="F:NAD binding"/>
    <property type="evidence" value="ECO:0007669"/>
    <property type="project" value="InterPro"/>
</dbReference>
<dbReference type="GO" id="GO:0016491">
    <property type="term" value="F:oxidoreductase activity"/>
    <property type="evidence" value="ECO:0007669"/>
    <property type="project" value="UniProtKB-KW"/>
</dbReference>
<dbReference type="Gene3D" id="3.40.718.10">
    <property type="entry name" value="Isopropylmalate Dehydrogenase"/>
    <property type="match status" value="1"/>
</dbReference>
<dbReference type="InterPro" id="IPR005255">
    <property type="entry name" value="PdxA_fam"/>
</dbReference>
<dbReference type="NCBIfam" id="TIGR00557">
    <property type="entry name" value="pdxA"/>
    <property type="match status" value="1"/>
</dbReference>
<dbReference type="NCBIfam" id="NF002992">
    <property type="entry name" value="PRK03743.1"/>
    <property type="match status" value="1"/>
</dbReference>
<dbReference type="PANTHER" id="PTHR30004">
    <property type="entry name" value="4-HYDROXYTHREONINE-4-PHOSPHATE DEHYDROGENASE"/>
    <property type="match status" value="1"/>
</dbReference>
<dbReference type="PANTHER" id="PTHR30004:SF6">
    <property type="entry name" value="D-THREONATE 4-PHOSPHATE DEHYDROGENASE"/>
    <property type="match status" value="1"/>
</dbReference>
<dbReference type="Pfam" id="PF04166">
    <property type="entry name" value="PdxA"/>
    <property type="match status" value="1"/>
</dbReference>
<dbReference type="SUPFAM" id="SSF53659">
    <property type="entry name" value="Isocitrate/Isopropylmalate dehydrogenase-like"/>
    <property type="match status" value="1"/>
</dbReference>
<feature type="chain" id="PRO_1000128238" description="Putative D-threonate 4-phosphate dehydrogenase">
    <location>
        <begin position="1"/>
        <end position="334"/>
    </location>
</feature>
<feature type="binding site" evidence="1">
    <location>
        <position position="141"/>
    </location>
    <ligand>
        <name>substrate</name>
    </ligand>
</feature>
<feature type="binding site" evidence="1">
    <location>
        <position position="142"/>
    </location>
    <ligand>
        <name>substrate</name>
    </ligand>
</feature>
<feature type="binding site" evidence="1">
    <location>
        <position position="171"/>
    </location>
    <ligand>
        <name>a divalent metal cation</name>
        <dbReference type="ChEBI" id="CHEBI:60240"/>
        <note>ligand shared between dimeric partners</note>
    </ligand>
</feature>
<feature type="binding site" evidence="1">
    <location>
        <position position="215"/>
    </location>
    <ligand>
        <name>a divalent metal cation</name>
        <dbReference type="ChEBI" id="CHEBI:60240"/>
        <note>ligand shared between dimeric partners</note>
    </ligand>
</feature>
<feature type="binding site" evidence="1">
    <location>
        <position position="270"/>
    </location>
    <ligand>
        <name>a divalent metal cation</name>
        <dbReference type="ChEBI" id="CHEBI:60240"/>
        <note>ligand shared between dimeric partners</note>
    </ligand>
</feature>
<feature type="binding site" evidence="1">
    <location>
        <position position="278"/>
    </location>
    <ligand>
        <name>substrate</name>
    </ligand>
</feature>
<feature type="binding site" evidence="1">
    <location>
        <position position="296"/>
    </location>
    <ligand>
        <name>substrate</name>
    </ligand>
</feature>
<comment type="function">
    <text evidence="2">Catalyzes the NAD-dependent oxidation and subsequent decarboxylation of D-threonate 4-phosphate to produce dihydroxyacetone phosphate (DHAP).</text>
</comment>
<comment type="catalytic activity">
    <reaction evidence="2">
        <text>4-O-phospho-D-threonate + NAD(+) = dihydroxyacetone phosphate + CO2 + NADH</text>
        <dbReference type="Rhea" id="RHEA:52396"/>
        <dbReference type="ChEBI" id="CHEBI:16526"/>
        <dbReference type="ChEBI" id="CHEBI:57540"/>
        <dbReference type="ChEBI" id="CHEBI:57642"/>
        <dbReference type="ChEBI" id="CHEBI:57945"/>
        <dbReference type="ChEBI" id="CHEBI:136590"/>
        <dbReference type="EC" id="1.1.1.408"/>
    </reaction>
</comment>
<comment type="cofactor">
    <cofactor evidence="1">
        <name>a divalent metal cation</name>
        <dbReference type="ChEBI" id="CHEBI:60240"/>
    </cofactor>
    <text evidence="1">Binds 1 divalent metal cation per subunit.</text>
</comment>
<comment type="subunit">
    <text evidence="2">Homodimer.</text>
</comment>
<comment type="similarity">
    <text evidence="3">Belongs to the PdxA family. PdxA2 subfamily.</text>
</comment>
<proteinExistence type="inferred from homology"/>
<reference key="1">
    <citation type="journal article" date="2007" name="PLoS ONE">
        <title>Analysis of the neurotoxin complex genes in Clostridium botulinum A1-A4 and B1 strains: BoNT/A3, /Ba4 and /B1 clusters are located within plasmids.</title>
        <authorList>
            <person name="Smith T.J."/>
            <person name="Hill K.K."/>
            <person name="Foley B.T."/>
            <person name="Detter J.C."/>
            <person name="Munk A.C."/>
            <person name="Bruce D.C."/>
            <person name="Doggett N.A."/>
            <person name="Smith L.A."/>
            <person name="Marks J.D."/>
            <person name="Xie G."/>
            <person name="Brettin T.S."/>
        </authorList>
    </citation>
    <scope>NUCLEOTIDE SEQUENCE [LARGE SCALE GENOMIC DNA]</scope>
    <source>
        <strain>Loch Maree / Type A3</strain>
    </source>
</reference>
<gene>
    <name type="primary">pdxA</name>
    <name type="ordered locus">CLK_1647</name>
</gene>
<name>PDXA2_CLOBM</name>
<organism>
    <name type="scientific">Clostridium botulinum (strain Loch Maree / Type A3)</name>
    <dbReference type="NCBI Taxonomy" id="498214"/>
    <lineage>
        <taxon>Bacteria</taxon>
        <taxon>Bacillati</taxon>
        <taxon>Bacillota</taxon>
        <taxon>Clostridia</taxon>
        <taxon>Eubacteriales</taxon>
        <taxon>Clostridiaceae</taxon>
        <taxon>Clostridium</taxon>
    </lineage>
</organism>
<accession>B1KVV5</accession>
<protein>
    <recommendedName>
        <fullName evidence="2">Putative D-threonate 4-phosphate dehydrogenase</fullName>
        <ecNumber evidence="2">1.1.1.408</ecNumber>
    </recommendedName>
</protein>
<keyword id="KW-0119">Carbohydrate metabolism</keyword>
<keyword id="KW-0479">Metal-binding</keyword>
<keyword id="KW-0520">NAD</keyword>
<keyword id="KW-0560">Oxidoreductase</keyword>